<organism>
    <name type="scientific">Actinobacillus pleuropneumoniae serotype 5b (strain L20)</name>
    <dbReference type="NCBI Taxonomy" id="416269"/>
    <lineage>
        <taxon>Bacteria</taxon>
        <taxon>Pseudomonadati</taxon>
        <taxon>Pseudomonadota</taxon>
        <taxon>Gammaproteobacteria</taxon>
        <taxon>Pasteurellales</taxon>
        <taxon>Pasteurellaceae</taxon>
        <taxon>Actinobacillus</taxon>
    </lineage>
</organism>
<feature type="chain" id="PRO_0000335694" description="4-diphosphocytidyl-2-C-methyl-D-erythritol kinase">
    <location>
        <begin position="1"/>
        <end position="285"/>
    </location>
</feature>
<feature type="active site" evidence="1">
    <location>
        <position position="12"/>
    </location>
</feature>
<feature type="active site" evidence="1">
    <location>
        <position position="137"/>
    </location>
</feature>
<feature type="binding site" evidence="1">
    <location>
        <begin position="95"/>
        <end position="105"/>
    </location>
    <ligand>
        <name>ATP</name>
        <dbReference type="ChEBI" id="CHEBI:30616"/>
    </ligand>
</feature>
<protein>
    <recommendedName>
        <fullName evidence="1">4-diphosphocytidyl-2-C-methyl-D-erythritol kinase</fullName>
        <shortName evidence="1">CMK</shortName>
        <ecNumber evidence="1">2.7.1.148</ecNumber>
    </recommendedName>
    <alternativeName>
        <fullName evidence="1">4-(cytidine-5'-diphospho)-2-C-methyl-D-erythritol kinase</fullName>
    </alternativeName>
</protein>
<keyword id="KW-0067">ATP-binding</keyword>
<keyword id="KW-0414">Isoprene biosynthesis</keyword>
<keyword id="KW-0418">Kinase</keyword>
<keyword id="KW-0547">Nucleotide-binding</keyword>
<keyword id="KW-1185">Reference proteome</keyword>
<keyword id="KW-0808">Transferase</keyword>
<comment type="function">
    <text evidence="1">Catalyzes the phosphorylation of the position 2 hydroxy group of 4-diphosphocytidyl-2C-methyl-D-erythritol.</text>
</comment>
<comment type="catalytic activity">
    <reaction evidence="1">
        <text>4-CDP-2-C-methyl-D-erythritol + ATP = 4-CDP-2-C-methyl-D-erythritol 2-phosphate + ADP + H(+)</text>
        <dbReference type="Rhea" id="RHEA:18437"/>
        <dbReference type="ChEBI" id="CHEBI:15378"/>
        <dbReference type="ChEBI" id="CHEBI:30616"/>
        <dbReference type="ChEBI" id="CHEBI:57823"/>
        <dbReference type="ChEBI" id="CHEBI:57919"/>
        <dbReference type="ChEBI" id="CHEBI:456216"/>
        <dbReference type="EC" id="2.7.1.148"/>
    </reaction>
</comment>
<comment type="pathway">
    <text evidence="1">Isoprenoid biosynthesis; isopentenyl diphosphate biosynthesis via DXP pathway; isopentenyl diphosphate from 1-deoxy-D-xylulose 5-phosphate: step 3/6.</text>
</comment>
<comment type="similarity">
    <text evidence="1">Belongs to the GHMP kinase family. IspE subfamily.</text>
</comment>
<reference key="1">
    <citation type="journal article" date="2008" name="J. Bacteriol.">
        <title>The complete genome sequence of Actinobacillus pleuropneumoniae L20 (serotype 5b).</title>
        <authorList>
            <person name="Foote S.J."/>
            <person name="Bosse J.T."/>
            <person name="Bouevitch A.B."/>
            <person name="Langford P.R."/>
            <person name="Young N.M."/>
            <person name="Nash J.H.E."/>
        </authorList>
    </citation>
    <scope>NUCLEOTIDE SEQUENCE [LARGE SCALE GENOMIC DNA]</scope>
    <source>
        <strain>L20</strain>
    </source>
</reference>
<sequence length="285" mass="31309">MTEKIILPSPAKLNLFLYITNKRADGYHELQTLFQFLDFGDDISLEVNESGEIELLNAIEGVAKEQNLIYRAAKLLQNHTACSKGAKIGVTKRLPMGGGVGGGSSNAATVLVGLNHFWQTGLSLEQLAELGLSLGADVPIFVRGFAAFAEGVGEKLVACQPRESWYVVLKPNVSISTAAVFQDPNLPRNTPKRTLSRLLSEEWTNDCEKVVRDHYFEVEDLIAELLQYATFRLTGTGACIFAEFESEAEAKAVFAHKPHNIFGFIAKGQNRSPLHQMLNLTTSPQ</sequence>
<accession>A3N0D8</accession>
<dbReference type="EC" id="2.7.1.148" evidence="1"/>
<dbReference type="EMBL" id="CP000569">
    <property type="protein sequence ID" value="ABN73874.1"/>
    <property type="molecule type" value="Genomic_DNA"/>
</dbReference>
<dbReference type="RefSeq" id="WP_011848465.1">
    <property type="nucleotide sequence ID" value="NC_009053.1"/>
</dbReference>
<dbReference type="SMR" id="A3N0D8"/>
<dbReference type="STRING" id="416269.APL_0776"/>
<dbReference type="EnsemblBacteria" id="ABN73874">
    <property type="protein sequence ID" value="ABN73874"/>
    <property type="gene ID" value="APL_0776"/>
</dbReference>
<dbReference type="KEGG" id="apl:APL_0776"/>
<dbReference type="PATRIC" id="fig|416269.6.peg.811"/>
<dbReference type="eggNOG" id="COG1947">
    <property type="taxonomic scope" value="Bacteria"/>
</dbReference>
<dbReference type="HOGENOM" id="CLU_053057_3_0_6"/>
<dbReference type="UniPathway" id="UPA00056">
    <property type="reaction ID" value="UER00094"/>
</dbReference>
<dbReference type="Proteomes" id="UP000001432">
    <property type="component" value="Chromosome"/>
</dbReference>
<dbReference type="GO" id="GO:0050515">
    <property type="term" value="F:4-(cytidine 5'-diphospho)-2-C-methyl-D-erythritol kinase activity"/>
    <property type="evidence" value="ECO:0007669"/>
    <property type="project" value="UniProtKB-UniRule"/>
</dbReference>
<dbReference type="GO" id="GO:0005524">
    <property type="term" value="F:ATP binding"/>
    <property type="evidence" value="ECO:0007669"/>
    <property type="project" value="UniProtKB-UniRule"/>
</dbReference>
<dbReference type="GO" id="GO:0019288">
    <property type="term" value="P:isopentenyl diphosphate biosynthetic process, methylerythritol 4-phosphate pathway"/>
    <property type="evidence" value="ECO:0007669"/>
    <property type="project" value="UniProtKB-UniRule"/>
</dbReference>
<dbReference type="GO" id="GO:0016114">
    <property type="term" value="P:terpenoid biosynthetic process"/>
    <property type="evidence" value="ECO:0007669"/>
    <property type="project" value="InterPro"/>
</dbReference>
<dbReference type="FunFam" id="3.30.230.10:FF:000022">
    <property type="entry name" value="4-diphosphocytidyl-2-C-methyl-D-erythritol kinase"/>
    <property type="match status" value="1"/>
</dbReference>
<dbReference type="Gene3D" id="3.30.230.10">
    <property type="match status" value="1"/>
</dbReference>
<dbReference type="Gene3D" id="3.30.70.890">
    <property type="entry name" value="GHMP kinase, C-terminal domain"/>
    <property type="match status" value="1"/>
</dbReference>
<dbReference type="HAMAP" id="MF_00061">
    <property type="entry name" value="IspE"/>
    <property type="match status" value="1"/>
</dbReference>
<dbReference type="InterPro" id="IPR013750">
    <property type="entry name" value="GHMP_kinase_C_dom"/>
</dbReference>
<dbReference type="InterPro" id="IPR036554">
    <property type="entry name" value="GHMP_kinase_C_sf"/>
</dbReference>
<dbReference type="InterPro" id="IPR006204">
    <property type="entry name" value="GHMP_kinase_N_dom"/>
</dbReference>
<dbReference type="InterPro" id="IPR004424">
    <property type="entry name" value="IspE"/>
</dbReference>
<dbReference type="InterPro" id="IPR020568">
    <property type="entry name" value="Ribosomal_Su5_D2-typ_SF"/>
</dbReference>
<dbReference type="InterPro" id="IPR014721">
    <property type="entry name" value="Ribsml_uS5_D2-typ_fold_subgr"/>
</dbReference>
<dbReference type="NCBIfam" id="TIGR00154">
    <property type="entry name" value="ispE"/>
    <property type="match status" value="1"/>
</dbReference>
<dbReference type="PANTHER" id="PTHR43527">
    <property type="entry name" value="4-DIPHOSPHOCYTIDYL-2-C-METHYL-D-ERYTHRITOL KINASE, CHLOROPLASTIC"/>
    <property type="match status" value="1"/>
</dbReference>
<dbReference type="PANTHER" id="PTHR43527:SF2">
    <property type="entry name" value="4-DIPHOSPHOCYTIDYL-2-C-METHYL-D-ERYTHRITOL KINASE, CHLOROPLASTIC"/>
    <property type="match status" value="1"/>
</dbReference>
<dbReference type="Pfam" id="PF08544">
    <property type="entry name" value="GHMP_kinases_C"/>
    <property type="match status" value="1"/>
</dbReference>
<dbReference type="Pfam" id="PF00288">
    <property type="entry name" value="GHMP_kinases_N"/>
    <property type="match status" value="1"/>
</dbReference>
<dbReference type="PIRSF" id="PIRSF010376">
    <property type="entry name" value="IspE"/>
    <property type="match status" value="1"/>
</dbReference>
<dbReference type="SUPFAM" id="SSF55060">
    <property type="entry name" value="GHMP Kinase, C-terminal domain"/>
    <property type="match status" value="1"/>
</dbReference>
<dbReference type="SUPFAM" id="SSF54211">
    <property type="entry name" value="Ribosomal protein S5 domain 2-like"/>
    <property type="match status" value="1"/>
</dbReference>
<gene>
    <name evidence="1" type="primary">ispE</name>
    <name type="ordered locus">APL_0776</name>
</gene>
<name>ISPE_ACTP2</name>
<proteinExistence type="inferred from homology"/>
<evidence type="ECO:0000255" key="1">
    <source>
        <dbReference type="HAMAP-Rule" id="MF_00061"/>
    </source>
</evidence>